<evidence type="ECO:0000255" key="1">
    <source>
        <dbReference type="HAMAP-Rule" id="MF_01658"/>
    </source>
</evidence>
<evidence type="ECO:0000256" key="2">
    <source>
        <dbReference type="SAM" id="MobiDB-lite"/>
    </source>
</evidence>
<name>COQ7_BORPD</name>
<protein>
    <recommendedName>
        <fullName evidence="1">3-demethoxyubiquinol 3-hydroxylase</fullName>
        <shortName evidence="1">DMQ hydroxylase</shortName>
        <ecNumber evidence="1">1.14.99.60</ecNumber>
    </recommendedName>
    <alternativeName>
        <fullName evidence="1">2-nonaprenyl-3-methyl-6-methoxy-1,4-benzoquinol hydroxylase</fullName>
    </alternativeName>
</protein>
<dbReference type="EC" id="1.14.99.60" evidence="1"/>
<dbReference type="EMBL" id="AM902716">
    <property type="protein sequence ID" value="CAP44380.1"/>
    <property type="molecule type" value="Genomic_DNA"/>
</dbReference>
<dbReference type="SMR" id="A9I769"/>
<dbReference type="STRING" id="94624.Bpet4032"/>
<dbReference type="KEGG" id="bpt:Bpet4032"/>
<dbReference type="eggNOG" id="COG2941">
    <property type="taxonomic scope" value="Bacteria"/>
</dbReference>
<dbReference type="UniPathway" id="UPA00232"/>
<dbReference type="Proteomes" id="UP000001225">
    <property type="component" value="Chromosome"/>
</dbReference>
<dbReference type="GO" id="GO:0005886">
    <property type="term" value="C:plasma membrane"/>
    <property type="evidence" value="ECO:0007669"/>
    <property type="project" value="UniProtKB-SubCell"/>
</dbReference>
<dbReference type="GO" id="GO:0008682">
    <property type="term" value="F:3-demethoxyubiquinol 3-hydroxylase activity"/>
    <property type="evidence" value="ECO:0007669"/>
    <property type="project" value="UniProtKB-EC"/>
</dbReference>
<dbReference type="GO" id="GO:0046872">
    <property type="term" value="F:metal ion binding"/>
    <property type="evidence" value="ECO:0007669"/>
    <property type="project" value="UniProtKB-KW"/>
</dbReference>
<dbReference type="GO" id="GO:0006744">
    <property type="term" value="P:ubiquinone biosynthetic process"/>
    <property type="evidence" value="ECO:0007669"/>
    <property type="project" value="UniProtKB-UniRule"/>
</dbReference>
<dbReference type="CDD" id="cd01042">
    <property type="entry name" value="DMQH"/>
    <property type="match status" value="1"/>
</dbReference>
<dbReference type="Gene3D" id="1.20.1260.10">
    <property type="match status" value="1"/>
</dbReference>
<dbReference type="HAMAP" id="MF_01658">
    <property type="entry name" value="COQ7"/>
    <property type="match status" value="1"/>
</dbReference>
<dbReference type="InterPro" id="IPR047809">
    <property type="entry name" value="COQ7_proteobact"/>
</dbReference>
<dbReference type="InterPro" id="IPR012347">
    <property type="entry name" value="Ferritin-like"/>
</dbReference>
<dbReference type="InterPro" id="IPR009078">
    <property type="entry name" value="Ferritin-like_SF"/>
</dbReference>
<dbReference type="InterPro" id="IPR011566">
    <property type="entry name" value="Ubq_synth_Coq7"/>
</dbReference>
<dbReference type="NCBIfam" id="NF033656">
    <property type="entry name" value="DMQ_monoox_COQ7"/>
    <property type="match status" value="1"/>
</dbReference>
<dbReference type="PANTHER" id="PTHR11237:SF4">
    <property type="entry name" value="5-DEMETHOXYUBIQUINONE HYDROXYLASE, MITOCHONDRIAL"/>
    <property type="match status" value="1"/>
</dbReference>
<dbReference type="PANTHER" id="PTHR11237">
    <property type="entry name" value="COENZYME Q10 BIOSYNTHESIS PROTEIN 7"/>
    <property type="match status" value="1"/>
</dbReference>
<dbReference type="Pfam" id="PF03232">
    <property type="entry name" value="COQ7"/>
    <property type="match status" value="1"/>
</dbReference>
<dbReference type="SUPFAM" id="SSF47240">
    <property type="entry name" value="Ferritin-like"/>
    <property type="match status" value="1"/>
</dbReference>
<gene>
    <name evidence="1" type="primary">coq7</name>
    <name type="ordered locus">Bpet4032</name>
</gene>
<keyword id="KW-1003">Cell membrane</keyword>
<keyword id="KW-0408">Iron</keyword>
<keyword id="KW-0472">Membrane</keyword>
<keyword id="KW-0479">Metal-binding</keyword>
<keyword id="KW-0503">Monooxygenase</keyword>
<keyword id="KW-0560">Oxidoreductase</keyword>
<keyword id="KW-0831">Ubiquinone biosynthesis</keyword>
<accession>A9I769</accession>
<feature type="chain" id="PRO_0000338661" description="3-demethoxyubiquinol 3-hydroxylase">
    <location>
        <begin position="1"/>
        <end position="225"/>
    </location>
</feature>
<feature type="region of interest" description="Disordered" evidence="2">
    <location>
        <begin position="1"/>
        <end position="20"/>
    </location>
</feature>
<feature type="region of interest" description="Disordered" evidence="2">
    <location>
        <begin position="181"/>
        <end position="203"/>
    </location>
</feature>
<feature type="compositionally biased region" description="Polar residues" evidence="2">
    <location>
        <begin position="1"/>
        <end position="11"/>
    </location>
</feature>
<feature type="compositionally biased region" description="Basic and acidic residues" evidence="2">
    <location>
        <begin position="184"/>
        <end position="195"/>
    </location>
</feature>
<feature type="binding site" evidence="1">
    <location>
        <position position="74"/>
    </location>
    <ligand>
        <name>Fe cation</name>
        <dbReference type="ChEBI" id="CHEBI:24875"/>
        <label>1</label>
    </ligand>
</feature>
<feature type="binding site" evidence="1">
    <location>
        <position position="104"/>
    </location>
    <ligand>
        <name>Fe cation</name>
        <dbReference type="ChEBI" id="CHEBI:24875"/>
        <label>1</label>
    </ligand>
</feature>
<feature type="binding site" evidence="1">
    <location>
        <position position="104"/>
    </location>
    <ligand>
        <name>Fe cation</name>
        <dbReference type="ChEBI" id="CHEBI:24875"/>
        <label>2</label>
    </ligand>
</feature>
<feature type="binding site" evidence="1">
    <location>
        <position position="107"/>
    </location>
    <ligand>
        <name>Fe cation</name>
        <dbReference type="ChEBI" id="CHEBI:24875"/>
        <label>1</label>
    </ligand>
</feature>
<feature type="binding site" evidence="1">
    <location>
        <position position="156"/>
    </location>
    <ligand>
        <name>Fe cation</name>
        <dbReference type="ChEBI" id="CHEBI:24875"/>
        <label>2</label>
    </ligand>
</feature>
<feature type="binding site" evidence="1">
    <location>
        <position position="188"/>
    </location>
    <ligand>
        <name>Fe cation</name>
        <dbReference type="ChEBI" id="CHEBI:24875"/>
        <label>1</label>
    </ligand>
</feature>
<feature type="binding site" evidence="1">
    <location>
        <position position="188"/>
    </location>
    <ligand>
        <name>Fe cation</name>
        <dbReference type="ChEBI" id="CHEBI:24875"/>
        <label>2</label>
    </ligand>
</feature>
<feature type="binding site" evidence="1">
    <location>
        <position position="191"/>
    </location>
    <ligand>
        <name>Fe cation</name>
        <dbReference type="ChEBI" id="CHEBI:24875"/>
        <label>2</label>
    </ligand>
</feature>
<sequence>MSVASTSSGFTPFSRRRGPLDPLFAEVDRALRVLSGAASSARPYPASAAEPVPPLSDQQKRHAAGLMRVNHVGEVCAQALYRGQAAACREAPVRELLLHAAAEEVDHLAWCGRRLEELGSRPSLLNPLWYAGSFTLGVLASCAGTARNLGFMAETERQVEAHLDGHLRSLPEADQRSRQIVSQMKDDEAQHRASAERAGGVPLPAPVRGAMRAMSRLMTSTAYWI</sequence>
<proteinExistence type="inferred from homology"/>
<organism>
    <name type="scientific">Bordetella petrii (strain ATCC BAA-461 / DSM 12804 / CCUG 43448)</name>
    <dbReference type="NCBI Taxonomy" id="340100"/>
    <lineage>
        <taxon>Bacteria</taxon>
        <taxon>Pseudomonadati</taxon>
        <taxon>Pseudomonadota</taxon>
        <taxon>Betaproteobacteria</taxon>
        <taxon>Burkholderiales</taxon>
        <taxon>Alcaligenaceae</taxon>
        <taxon>Bordetella</taxon>
    </lineage>
</organism>
<comment type="function">
    <text evidence="1">Catalyzes the hydroxylation of 2-nonaprenyl-3-methyl-6-methoxy-1,4-benzoquinol during ubiquinone biosynthesis.</text>
</comment>
<comment type="catalytic activity">
    <reaction evidence="1">
        <text>a 5-methoxy-2-methyl-3-(all-trans-polyprenyl)benzene-1,4-diol + AH2 + O2 = a 3-demethylubiquinol + A + H2O</text>
        <dbReference type="Rhea" id="RHEA:50908"/>
        <dbReference type="Rhea" id="RHEA-COMP:10859"/>
        <dbReference type="Rhea" id="RHEA-COMP:10914"/>
        <dbReference type="ChEBI" id="CHEBI:13193"/>
        <dbReference type="ChEBI" id="CHEBI:15377"/>
        <dbReference type="ChEBI" id="CHEBI:15379"/>
        <dbReference type="ChEBI" id="CHEBI:17499"/>
        <dbReference type="ChEBI" id="CHEBI:84167"/>
        <dbReference type="ChEBI" id="CHEBI:84422"/>
        <dbReference type="EC" id="1.14.99.60"/>
    </reaction>
</comment>
<comment type="cofactor">
    <cofactor evidence="1">
        <name>Fe cation</name>
        <dbReference type="ChEBI" id="CHEBI:24875"/>
    </cofactor>
    <text evidence="1">Binds 2 iron ions per subunit.</text>
</comment>
<comment type="pathway">
    <text evidence="1">Cofactor biosynthesis; ubiquinone biosynthesis.</text>
</comment>
<comment type="subcellular location">
    <subcellularLocation>
        <location evidence="1">Cell membrane</location>
        <topology evidence="1">Peripheral membrane protein</topology>
    </subcellularLocation>
</comment>
<comment type="similarity">
    <text evidence="1">Belongs to the COQ7 family.</text>
</comment>
<reference key="1">
    <citation type="journal article" date="2008" name="BMC Genomics">
        <title>The missing link: Bordetella petrii is endowed with both the metabolic versatility of environmental bacteria and virulence traits of pathogenic Bordetellae.</title>
        <authorList>
            <person name="Gross R."/>
            <person name="Guzman C.A."/>
            <person name="Sebaihia M."/>
            <person name="Martin dos Santos V.A.P."/>
            <person name="Pieper D.H."/>
            <person name="Koebnik R."/>
            <person name="Lechner M."/>
            <person name="Bartels D."/>
            <person name="Buhrmester J."/>
            <person name="Choudhuri J.V."/>
            <person name="Ebensen T."/>
            <person name="Gaigalat L."/>
            <person name="Herrmann S."/>
            <person name="Khachane A.N."/>
            <person name="Larisch C."/>
            <person name="Link S."/>
            <person name="Linke B."/>
            <person name="Meyer F."/>
            <person name="Mormann S."/>
            <person name="Nakunst D."/>
            <person name="Rueckert C."/>
            <person name="Schneiker-Bekel S."/>
            <person name="Schulze K."/>
            <person name="Voerholter F.-J."/>
            <person name="Yevsa T."/>
            <person name="Engle J.T."/>
            <person name="Goldman W.E."/>
            <person name="Puehler A."/>
            <person name="Goebel U.B."/>
            <person name="Goesmann A."/>
            <person name="Bloecker H."/>
            <person name="Kaiser O."/>
            <person name="Martinez-Arias R."/>
        </authorList>
    </citation>
    <scope>NUCLEOTIDE SEQUENCE [LARGE SCALE GENOMIC DNA]</scope>
    <source>
        <strain>ATCC BAA-461 / DSM 12804 / CCUG 43448</strain>
    </source>
</reference>